<feature type="chain" id="PRO_1000045976" description="Tagatose 1,6-diphosphate aldolase">
    <location>
        <begin position="1"/>
        <end position="326"/>
    </location>
</feature>
<sequence length="326" mass="36595">MSKSNQKIASIEQLSNNEGIISALAFDQRGALKRMMAKHQTEEPTVAQIEQLKVLVAEELTQYASSILLDPEYGLPASDARNKDCGLLLAYEKTGYDVNAKGRLPDCLVEWSAKRLKEQGANAVKFLLYYDVDDAEEINIQKKAYIERIGSECVAEDIPFFLEVLTYDDNIPDNGSVEFAKVKPRKVNEAMKLFSEPRFNVDVLKVEVPVNMKYVEGFAEGEVVYTKEEAAQHFKDQDAATHLPYIYLSAGVSAELFQETLKFAHEAGAKFNGVLCGRATWSGAVQVYIEQGEDAAREWLRTTGFKNIDDLNKVLKDTATSWKQRK</sequence>
<evidence type="ECO:0000255" key="1">
    <source>
        <dbReference type="HAMAP-Rule" id="MF_00734"/>
    </source>
</evidence>
<organism>
    <name type="scientific">Staphylococcus aureus (strain Mu3 / ATCC 700698)</name>
    <dbReference type="NCBI Taxonomy" id="418127"/>
    <lineage>
        <taxon>Bacteria</taxon>
        <taxon>Bacillati</taxon>
        <taxon>Bacillota</taxon>
        <taxon>Bacilli</taxon>
        <taxon>Bacillales</taxon>
        <taxon>Staphylococcaceae</taxon>
        <taxon>Staphylococcus</taxon>
    </lineage>
</organism>
<name>LACD_STAA1</name>
<keyword id="KW-0423">Lactose metabolism</keyword>
<keyword id="KW-0456">Lyase</keyword>
<accession>A7X574</accession>
<proteinExistence type="inferred from homology"/>
<comment type="catalytic activity">
    <reaction evidence="1">
        <text>D-tagatofuranose 1,6-bisphosphate = D-glyceraldehyde 3-phosphate + dihydroxyacetone phosphate</text>
        <dbReference type="Rhea" id="RHEA:22948"/>
        <dbReference type="ChEBI" id="CHEBI:57642"/>
        <dbReference type="ChEBI" id="CHEBI:58694"/>
        <dbReference type="ChEBI" id="CHEBI:59776"/>
        <dbReference type="EC" id="4.1.2.40"/>
    </reaction>
</comment>
<comment type="pathway">
    <text evidence="1">Carbohydrate metabolism; D-tagatose 6-phosphate degradation; D-glyceraldehyde 3-phosphate and glycerone phosphate from D-tagatose 6-phosphate: step 2/2.</text>
</comment>
<comment type="similarity">
    <text evidence="1">Belongs to the aldolase LacD family.</text>
</comment>
<gene>
    <name evidence="1" type="primary">lacD</name>
    <name type="ordered locus">SAHV_2176</name>
</gene>
<reference key="1">
    <citation type="journal article" date="2008" name="Antimicrob. Agents Chemother.">
        <title>Mutated response regulator graR is responsible for phenotypic conversion of Staphylococcus aureus from heterogeneous vancomycin-intermediate resistance to vancomycin-intermediate resistance.</title>
        <authorList>
            <person name="Neoh H.-M."/>
            <person name="Cui L."/>
            <person name="Yuzawa H."/>
            <person name="Takeuchi F."/>
            <person name="Matsuo M."/>
            <person name="Hiramatsu K."/>
        </authorList>
    </citation>
    <scope>NUCLEOTIDE SEQUENCE [LARGE SCALE GENOMIC DNA]</scope>
    <source>
        <strain>Mu3 / ATCC 700698</strain>
    </source>
</reference>
<protein>
    <recommendedName>
        <fullName evidence="1">Tagatose 1,6-diphosphate aldolase</fullName>
        <ecNumber evidence="1">4.1.2.40</ecNumber>
    </recommendedName>
    <alternativeName>
        <fullName evidence="1">D-tagatose-1,6-bisphosphate aldolase</fullName>
    </alternativeName>
    <alternativeName>
        <fullName evidence="1">Tagatose-bisphosphate aldolase</fullName>
    </alternativeName>
</protein>
<dbReference type="EC" id="4.1.2.40" evidence="1"/>
<dbReference type="EMBL" id="AP009324">
    <property type="protein sequence ID" value="BAF79059.1"/>
    <property type="molecule type" value="Genomic_DNA"/>
</dbReference>
<dbReference type="RefSeq" id="WP_000047009.1">
    <property type="nucleotide sequence ID" value="NZ_CTYB01000055.1"/>
</dbReference>
<dbReference type="SMR" id="A7X574"/>
<dbReference type="KEGG" id="saw:SAHV_2176"/>
<dbReference type="HOGENOM" id="CLU_058971_0_1_9"/>
<dbReference type="UniPathway" id="UPA00704">
    <property type="reaction ID" value="UER00716"/>
</dbReference>
<dbReference type="GO" id="GO:0061595">
    <property type="term" value="F:6-deoxy-6-sulfofructose-1-phosphate aldolase activity"/>
    <property type="evidence" value="ECO:0007669"/>
    <property type="project" value="TreeGrafter"/>
</dbReference>
<dbReference type="GO" id="GO:0009024">
    <property type="term" value="F:tagatose-6-phosphate kinase activity"/>
    <property type="evidence" value="ECO:0007669"/>
    <property type="project" value="InterPro"/>
</dbReference>
<dbReference type="GO" id="GO:0009025">
    <property type="term" value="F:tagatose-bisphosphate aldolase activity"/>
    <property type="evidence" value="ECO:0007669"/>
    <property type="project" value="UniProtKB-UniRule"/>
</dbReference>
<dbReference type="GO" id="GO:1902777">
    <property type="term" value="P:6-sulfoquinovose(1-) catabolic process"/>
    <property type="evidence" value="ECO:0007669"/>
    <property type="project" value="TreeGrafter"/>
</dbReference>
<dbReference type="GO" id="GO:2001059">
    <property type="term" value="P:D-tagatose 6-phosphate catabolic process"/>
    <property type="evidence" value="ECO:0007669"/>
    <property type="project" value="UniProtKB-UniRule"/>
</dbReference>
<dbReference type="GO" id="GO:0019512">
    <property type="term" value="P:lactose catabolic process via tagatose-6-phosphate"/>
    <property type="evidence" value="ECO:0007669"/>
    <property type="project" value="InterPro"/>
</dbReference>
<dbReference type="FunFam" id="3.20.20.70:FF:000137">
    <property type="entry name" value="Tagatose 1,6-diphosphate aldolase 2"/>
    <property type="match status" value="1"/>
</dbReference>
<dbReference type="Gene3D" id="3.20.20.70">
    <property type="entry name" value="Aldolase class I"/>
    <property type="match status" value="1"/>
</dbReference>
<dbReference type="HAMAP" id="MF_00734">
    <property type="entry name" value="LacD"/>
    <property type="match status" value="1"/>
</dbReference>
<dbReference type="InterPro" id="IPR013785">
    <property type="entry name" value="Aldolase_TIM"/>
</dbReference>
<dbReference type="InterPro" id="IPR002915">
    <property type="entry name" value="DeoC/FbaB/LacD_aldolase"/>
</dbReference>
<dbReference type="InterPro" id="IPR050552">
    <property type="entry name" value="LacD_aldolase"/>
</dbReference>
<dbReference type="InterPro" id="IPR005927">
    <property type="entry name" value="Tag_1.6-dipho_adolase"/>
</dbReference>
<dbReference type="NCBIfam" id="TIGR01232">
    <property type="entry name" value="lacD"/>
    <property type="match status" value="1"/>
</dbReference>
<dbReference type="NCBIfam" id="NF003180">
    <property type="entry name" value="PRK04161.1"/>
    <property type="match status" value="1"/>
</dbReference>
<dbReference type="NCBIfam" id="NF009065">
    <property type="entry name" value="PRK12399.1"/>
    <property type="match status" value="1"/>
</dbReference>
<dbReference type="NCBIfam" id="NF009498">
    <property type="entry name" value="PRK12858.1"/>
    <property type="match status" value="1"/>
</dbReference>
<dbReference type="PANTHER" id="PTHR39340">
    <property type="entry name" value="SULFOFRUCTOSEPHOSPHATE ALDOLASE"/>
    <property type="match status" value="1"/>
</dbReference>
<dbReference type="PANTHER" id="PTHR39340:SF1">
    <property type="entry name" value="SULFOFRUCTOSEPHOSPHATE ALDOLASE"/>
    <property type="match status" value="1"/>
</dbReference>
<dbReference type="Pfam" id="PF01791">
    <property type="entry name" value="DeoC"/>
    <property type="match status" value="1"/>
</dbReference>
<dbReference type="SMART" id="SM01133">
    <property type="entry name" value="DeoC"/>
    <property type="match status" value="1"/>
</dbReference>
<dbReference type="SUPFAM" id="SSF51569">
    <property type="entry name" value="Aldolase"/>
    <property type="match status" value="1"/>
</dbReference>